<feature type="chain" id="PRO_1000020244" description="1-deoxy-D-xylulose 5-phosphate reductoisomerase">
    <location>
        <begin position="1"/>
        <end position="384"/>
    </location>
</feature>
<feature type="binding site" evidence="1">
    <location>
        <position position="10"/>
    </location>
    <ligand>
        <name>NADPH</name>
        <dbReference type="ChEBI" id="CHEBI:57783"/>
    </ligand>
</feature>
<feature type="binding site" evidence="1">
    <location>
        <position position="11"/>
    </location>
    <ligand>
        <name>NADPH</name>
        <dbReference type="ChEBI" id="CHEBI:57783"/>
    </ligand>
</feature>
<feature type="binding site" evidence="1">
    <location>
        <position position="12"/>
    </location>
    <ligand>
        <name>NADPH</name>
        <dbReference type="ChEBI" id="CHEBI:57783"/>
    </ligand>
</feature>
<feature type="binding site" evidence="1">
    <location>
        <position position="13"/>
    </location>
    <ligand>
        <name>NADPH</name>
        <dbReference type="ChEBI" id="CHEBI:57783"/>
    </ligand>
</feature>
<feature type="binding site" evidence="1">
    <location>
        <position position="36"/>
    </location>
    <ligand>
        <name>NADPH</name>
        <dbReference type="ChEBI" id="CHEBI:57783"/>
    </ligand>
</feature>
<feature type="binding site" evidence="1">
    <location>
        <position position="122"/>
    </location>
    <ligand>
        <name>NADPH</name>
        <dbReference type="ChEBI" id="CHEBI:57783"/>
    </ligand>
</feature>
<feature type="binding site" evidence="1">
    <location>
        <position position="123"/>
    </location>
    <ligand>
        <name>1-deoxy-D-xylulose 5-phosphate</name>
        <dbReference type="ChEBI" id="CHEBI:57792"/>
    </ligand>
</feature>
<feature type="binding site" evidence="1">
    <location>
        <position position="124"/>
    </location>
    <ligand>
        <name>NADPH</name>
        <dbReference type="ChEBI" id="CHEBI:57783"/>
    </ligand>
</feature>
<feature type="binding site" evidence="1">
    <location>
        <position position="148"/>
    </location>
    <ligand>
        <name>Mn(2+)</name>
        <dbReference type="ChEBI" id="CHEBI:29035"/>
    </ligand>
</feature>
<feature type="binding site" evidence="1">
    <location>
        <position position="149"/>
    </location>
    <ligand>
        <name>1-deoxy-D-xylulose 5-phosphate</name>
        <dbReference type="ChEBI" id="CHEBI:57792"/>
    </ligand>
</feature>
<feature type="binding site" evidence="1">
    <location>
        <position position="150"/>
    </location>
    <ligand>
        <name>1-deoxy-D-xylulose 5-phosphate</name>
        <dbReference type="ChEBI" id="CHEBI:57792"/>
    </ligand>
</feature>
<feature type="binding site" evidence="1">
    <location>
        <position position="150"/>
    </location>
    <ligand>
        <name>Mn(2+)</name>
        <dbReference type="ChEBI" id="CHEBI:29035"/>
    </ligand>
</feature>
<feature type="binding site" evidence="1">
    <location>
        <position position="174"/>
    </location>
    <ligand>
        <name>1-deoxy-D-xylulose 5-phosphate</name>
        <dbReference type="ChEBI" id="CHEBI:57792"/>
    </ligand>
</feature>
<feature type="binding site" evidence="1">
    <location>
        <position position="197"/>
    </location>
    <ligand>
        <name>1-deoxy-D-xylulose 5-phosphate</name>
        <dbReference type="ChEBI" id="CHEBI:57792"/>
    </ligand>
</feature>
<feature type="binding site" evidence="1">
    <location>
        <position position="203"/>
    </location>
    <ligand>
        <name>NADPH</name>
        <dbReference type="ChEBI" id="CHEBI:57783"/>
    </ligand>
</feature>
<feature type="binding site" evidence="1">
    <location>
        <position position="210"/>
    </location>
    <ligand>
        <name>1-deoxy-D-xylulose 5-phosphate</name>
        <dbReference type="ChEBI" id="CHEBI:57792"/>
    </ligand>
</feature>
<feature type="binding site" evidence="1">
    <location>
        <position position="215"/>
    </location>
    <ligand>
        <name>1-deoxy-D-xylulose 5-phosphate</name>
        <dbReference type="ChEBI" id="CHEBI:57792"/>
    </ligand>
</feature>
<feature type="binding site" evidence="1">
    <location>
        <position position="216"/>
    </location>
    <ligand>
        <name>1-deoxy-D-xylulose 5-phosphate</name>
        <dbReference type="ChEBI" id="CHEBI:57792"/>
    </ligand>
</feature>
<feature type="binding site" evidence="1">
    <location>
        <position position="219"/>
    </location>
    <ligand>
        <name>1-deoxy-D-xylulose 5-phosphate</name>
        <dbReference type="ChEBI" id="CHEBI:57792"/>
    </ligand>
</feature>
<feature type="binding site" evidence="1">
    <location>
        <position position="219"/>
    </location>
    <ligand>
        <name>Mn(2+)</name>
        <dbReference type="ChEBI" id="CHEBI:29035"/>
    </ligand>
</feature>
<dbReference type="EC" id="1.1.1.267" evidence="1"/>
<dbReference type="EMBL" id="CP000492">
    <property type="protein sequence ID" value="ABL66664.1"/>
    <property type="molecule type" value="Genomic_DNA"/>
</dbReference>
<dbReference type="RefSeq" id="WP_015961191.1">
    <property type="nucleotide sequence ID" value="NC_008639.1"/>
</dbReference>
<dbReference type="SMR" id="A1BJT7"/>
<dbReference type="STRING" id="290317.Cpha266_2680"/>
<dbReference type="KEGG" id="cph:Cpha266_2680"/>
<dbReference type="eggNOG" id="COG0743">
    <property type="taxonomic scope" value="Bacteria"/>
</dbReference>
<dbReference type="HOGENOM" id="CLU_035714_4_0_10"/>
<dbReference type="OrthoDB" id="9806546at2"/>
<dbReference type="UniPathway" id="UPA00056">
    <property type="reaction ID" value="UER00092"/>
</dbReference>
<dbReference type="Proteomes" id="UP000008701">
    <property type="component" value="Chromosome"/>
</dbReference>
<dbReference type="GO" id="GO:0030604">
    <property type="term" value="F:1-deoxy-D-xylulose-5-phosphate reductoisomerase activity"/>
    <property type="evidence" value="ECO:0007669"/>
    <property type="project" value="UniProtKB-UniRule"/>
</dbReference>
<dbReference type="GO" id="GO:0030145">
    <property type="term" value="F:manganese ion binding"/>
    <property type="evidence" value="ECO:0007669"/>
    <property type="project" value="TreeGrafter"/>
</dbReference>
<dbReference type="GO" id="GO:0070402">
    <property type="term" value="F:NADPH binding"/>
    <property type="evidence" value="ECO:0007669"/>
    <property type="project" value="InterPro"/>
</dbReference>
<dbReference type="GO" id="GO:0051484">
    <property type="term" value="P:isopentenyl diphosphate biosynthetic process, methylerythritol 4-phosphate pathway involved in terpenoid biosynthetic process"/>
    <property type="evidence" value="ECO:0007669"/>
    <property type="project" value="TreeGrafter"/>
</dbReference>
<dbReference type="FunFam" id="1.10.1740.10:FF:000004">
    <property type="entry name" value="1-deoxy-D-xylulose 5-phosphate reductoisomerase"/>
    <property type="match status" value="1"/>
</dbReference>
<dbReference type="FunFam" id="3.40.50.720:FF:000045">
    <property type="entry name" value="1-deoxy-D-xylulose 5-phosphate reductoisomerase"/>
    <property type="match status" value="1"/>
</dbReference>
<dbReference type="Gene3D" id="1.10.1740.10">
    <property type="match status" value="1"/>
</dbReference>
<dbReference type="Gene3D" id="3.40.50.720">
    <property type="entry name" value="NAD(P)-binding Rossmann-like Domain"/>
    <property type="match status" value="1"/>
</dbReference>
<dbReference type="HAMAP" id="MF_00183">
    <property type="entry name" value="DXP_reductoisom"/>
    <property type="match status" value="1"/>
</dbReference>
<dbReference type="InterPro" id="IPR003821">
    <property type="entry name" value="DXP_reductoisomerase"/>
</dbReference>
<dbReference type="InterPro" id="IPR013644">
    <property type="entry name" value="DXP_reductoisomerase_C"/>
</dbReference>
<dbReference type="InterPro" id="IPR013512">
    <property type="entry name" value="DXP_reductoisomerase_N"/>
</dbReference>
<dbReference type="InterPro" id="IPR026877">
    <property type="entry name" value="DXPR_C"/>
</dbReference>
<dbReference type="InterPro" id="IPR036169">
    <property type="entry name" value="DXPR_C_sf"/>
</dbReference>
<dbReference type="InterPro" id="IPR036291">
    <property type="entry name" value="NAD(P)-bd_dom_sf"/>
</dbReference>
<dbReference type="NCBIfam" id="TIGR00243">
    <property type="entry name" value="Dxr"/>
    <property type="match status" value="1"/>
</dbReference>
<dbReference type="NCBIfam" id="NF009114">
    <property type="entry name" value="PRK12464.1"/>
    <property type="match status" value="1"/>
</dbReference>
<dbReference type="PANTHER" id="PTHR30525">
    <property type="entry name" value="1-DEOXY-D-XYLULOSE 5-PHOSPHATE REDUCTOISOMERASE"/>
    <property type="match status" value="1"/>
</dbReference>
<dbReference type="PANTHER" id="PTHR30525:SF0">
    <property type="entry name" value="1-DEOXY-D-XYLULOSE 5-PHOSPHATE REDUCTOISOMERASE, CHLOROPLASTIC"/>
    <property type="match status" value="1"/>
</dbReference>
<dbReference type="Pfam" id="PF08436">
    <property type="entry name" value="DXP_redisom_C"/>
    <property type="match status" value="1"/>
</dbReference>
<dbReference type="Pfam" id="PF02670">
    <property type="entry name" value="DXP_reductoisom"/>
    <property type="match status" value="1"/>
</dbReference>
<dbReference type="Pfam" id="PF13288">
    <property type="entry name" value="DXPR_C"/>
    <property type="match status" value="1"/>
</dbReference>
<dbReference type="PIRSF" id="PIRSF006205">
    <property type="entry name" value="Dxp_reductismrs"/>
    <property type="match status" value="1"/>
</dbReference>
<dbReference type="SUPFAM" id="SSF69055">
    <property type="entry name" value="1-deoxy-D-xylulose-5-phosphate reductoisomerase, C-terminal domain"/>
    <property type="match status" value="1"/>
</dbReference>
<dbReference type="SUPFAM" id="SSF55347">
    <property type="entry name" value="Glyceraldehyde-3-phosphate dehydrogenase-like, C-terminal domain"/>
    <property type="match status" value="1"/>
</dbReference>
<dbReference type="SUPFAM" id="SSF51735">
    <property type="entry name" value="NAD(P)-binding Rossmann-fold domains"/>
    <property type="match status" value="1"/>
</dbReference>
<evidence type="ECO:0000255" key="1">
    <source>
        <dbReference type="HAMAP-Rule" id="MF_00183"/>
    </source>
</evidence>
<reference key="1">
    <citation type="submission" date="2006-12" db="EMBL/GenBank/DDBJ databases">
        <title>Complete sequence of Chlorobium phaeobacteroides DSM 266.</title>
        <authorList>
            <consortium name="US DOE Joint Genome Institute"/>
            <person name="Copeland A."/>
            <person name="Lucas S."/>
            <person name="Lapidus A."/>
            <person name="Barry K."/>
            <person name="Detter J.C."/>
            <person name="Glavina del Rio T."/>
            <person name="Hammon N."/>
            <person name="Israni S."/>
            <person name="Pitluck S."/>
            <person name="Goltsman E."/>
            <person name="Schmutz J."/>
            <person name="Larimer F."/>
            <person name="Land M."/>
            <person name="Hauser L."/>
            <person name="Mikhailova N."/>
            <person name="Li T."/>
            <person name="Overmann J."/>
            <person name="Bryant D.A."/>
            <person name="Richardson P."/>
        </authorList>
    </citation>
    <scope>NUCLEOTIDE SEQUENCE [LARGE SCALE GENOMIC DNA]</scope>
    <source>
        <strain>DSM 266 / SMG 266 / 2430</strain>
    </source>
</reference>
<organism>
    <name type="scientific">Chlorobium phaeobacteroides (strain DSM 266 / SMG 266 / 2430)</name>
    <dbReference type="NCBI Taxonomy" id="290317"/>
    <lineage>
        <taxon>Bacteria</taxon>
        <taxon>Pseudomonadati</taxon>
        <taxon>Chlorobiota</taxon>
        <taxon>Chlorobiia</taxon>
        <taxon>Chlorobiales</taxon>
        <taxon>Chlorobiaceae</taxon>
        <taxon>Chlorobium/Pelodictyon group</taxon>
        <taxon>Chlorobium</taxon>
    </lineage>
</organism>
<sequence>MRSLSILGSTGSIGLSTLDVVRQHPEQFTITGLAEGHDVGMLVKQIREFNPRLVSVRNADAAAELASLLGNEKPEIFYGIEGAATVAAADGADMVVSAIVGAAGLVPTISAIKAGKNIALANKETMVVAGRLVTDLARQHKVTIIPVDSEHSAIYQSLLGHRHEDVLRLILTASGGPFLNTSAEELREVTLEQALKHPKWTMGAKITIDSATLMNKGLEVIEAHWLFDMPAHKIGVVVHPQSIIHSMVEYIDGCVMAQLGMPDMRAPIAYAIAYPERCPSGIERLDLPKIGSLSFQEPDPGRFPCLRLAYESLEAGRTCPAVLNAANEIAVAAFLDKRIGFTDIADTVDKTMQAHEAYTPVSLEEYLEADRWAREMAKGLVERA</sequence>
<name>DXR_CHLPD</name>
<accession>A1BJT7</accession>
<protein>
    <recommendedName>
        <fullName evidence="1">1-deoxy-D-xylulose 5-phosphate reductoisomerase</fullName>
        <shortName evidence="1">DXP reductoisomerase</shortName>
        <ecNumber evidence="1">1.1.1.267</ecNumber>
    </recommendedName>
    <alternativeName>
        <fullName evidence="1">1-deoxyxylulose-5-phosphate reductoisomerase</fullName>
    </alternativeName>
    <alternativeName>
        <fullName evidence="1">2-C-methyl-D-erythritol 4-phosphate synthase</fullName>
    </alternativeName>
</protein>
<keyword id="KW-0414">Isoprene biosynthesis</keyword>
<keyword id="KW-0464">Manganese</keyword>
<keyword id="KW-0479">Metal-binding</keyword>
<keyword id="KW-0521">NADP</keyword>
<keyword id="KW-0560">Oxidoreductase</keyword>
<keyword id="KW-1185">Reference proteome</keyword>
<proteinExistence type="inferred from homology"/>
<gene>
    <name evidence="1" type="primary">dxr</name>
    <name type="ordered locus">Cpha266_2680</name>
</gene>
<comment type="function">
    <text evidence="1">Catalyzes the NADPH-dependent rearrangement and reduction of 1-deoxy-D-xylulose-5-phosphate (DXP) to 2-C-methyl-D-erythritol 4-phosphate (MEP).</text>
</comment>
<comment type="catalytic activity">
    <reaction evidence="1">
        <text>2-C-methyl-D-erythritol 4-phosphate + NADP(+) = 1-deoxy-D-xylulose 5-phosphate + NADPH + H(+)</text>
        <dbReference type="Rhea" id="RHEA:13717"/>
        <dbReference type="ChEBI" id="CHEBI:15378"/>
        <dbReference type="ChEBI" id="CHEBI:57783"/>
        <dbReference type="ChEBI" id="CHEBI:57792"/>
        <dbReference type="ChEBI" id="CHEBI:58262"/>
        <dbReference type="ChEBI" id="CHEBI:58349"/>
        <dbReference type="EC" id="1.1.1.267"/>
    </reaction>
    <physiologicalReaction direction="right-to-left" evidence="1">
        <dbReference type="Rhea" id="RHEA:13719"/>
    </physiologicalReaction>
</comment>
<comment type="cofactor">
    <cofactor evidence="1">
        <name>Mg(2+)</name>
        <dbReference type="ChEBI" id="CHEBI:18420"/>
    </cofactor>
    <cofactor evidence="1">
        <name>Mn(2+)</name>
        <dbReference type="ChEBI" id="CHEBI:29035"/>
    </cofactor>
</comment>
<comment type="pathway">
    <text evidence="1">Isoprenoid biosynthesis; isopentenyl diphosphate biosynthesis via DXP pathway; isopentenyl diphosphate from 1-deoxy-D-xylulose 5-phosphate: step 1/6.</text>
</comment>
<comment type="similarity">
    <text evidence="1">Belongs to the DXR family.</text>
</comment>